<sequence>MEPPLKRCRLCHQALPKLPQLPFEMIDKILSHLPFDLHVDVVGASAATRLRALRRPDRLTRYHEYDLAADELFAAHWNIEAADPARPYVGQLCRSTCASAAQKFFNERVPRAAAMCMLNAPRAESDSVLTRRWNWWGLTRTLLIHEANSGRGRRPARVRVDADEACIGYHAPFCDASVFEFNAQPDHVVFVLLDDDKIELNMYGKRVYRIV</sequence>
<organism>
    <name type="scientific">Orgyia pseudotsugata multicapsid polyhedrosis virus</name>
    <name type="common">OpMNPV</name>
    <dbReference type="NCBI Taxonomy" id="262177"/>
    <lineage>
        <taxon>Viruses</taxon>
        <taxon>Viruses incertae sedis</taxon>
        <taxon>Naldaviricetes</taxon>
        <taxon>Lefavirales</taxon>
        <taxon>Baculoviridae</taxon>
        <taxon>Alphabaculovirus</taxon>
        <taxon>Alphabaculovirus orpseudotsugatae</taxon>
    </lineage>
</organism>
<keyword id="KW-1185">Reference proteome</keyword>
<keyword id="KW-0804">Transcription</keyword>
<keyword id="KW-0805">Transcription regulation</keyword>
<comment type="function">
    <text evidence="1">Involved in late/very late gene activation.</text>
</comment>
<evidence type="ECO:0000250" key="1"/>
<protein>
    <recommendedName>
        <fullName>Late expression factor 7</fullName>
    </recommendedName>
</protein>
<name>LEF7_NPVOP</name>
<reference key="1">
    <citation type="journal article" date="1997" name="Virology">
        <title>The sequence of the Orgyia pseudotsugata multinucleocapsid nuclear polyhedrosis virus genome.</title>
        <authorList>
            <person name="Ahrens C.H."/>
            <person name="Russell R.R."/>
            <person name="Funk C.J."/>
            <person name="Evans J."/>
            <person name="Harwood S."/>
            <person name="Rohrmann G.F."/>
        </authorList>
    </citation>
    <scope>NUCLEOTIDE SEQUENCE [LARGE SCALE GENOMIC DNA]</scope>
</reference>
<gene>
    <name type="primary">LEF-7</name>
    <name type="ORF">ORF123</name>
</gene>
<feature type="chain" id="PRO_0000132830" description="Late expression factor 7">
    <location>
        <begin position="1"/>
        <end position="211"/>
    </location>
</feature>
<proteinExistence type="inferred from homology"/>
<accession>O10362</accession>
<dbReference type="EMBL" id="U75930">
    <property type="protein sequence ID" value="AAC59122.1"/>
    <property type="molecule type" value="Genomic_DNA"/>
</dbReference>
<dbReference type="RefSeq" id="NP_046279.1">
    <property type="nucleotide sequence ID" value="NC_001875.2"/>
</dbReference>
<dbReference type="KEGG" id="vg:912084"/>
<dbReference type="OrthoDB" id="13986at10239"/>
<dbReference type="Proteomes" id="UP000009248">
    <property type="component" value="Genome"/>
</dbReference>
<organismHost>
    <name type="scientific">Orgyia pseudotsugata</name>
    <name type="common">Douglas-fir tussock moth</name>
    <dbReference type="NCBI Taxonomy" id="33414"/>
</organismHost>